<protein>
    <recommendedName>
        <fullName evidence="1">Pantothenate synthetase</fullName>
        <shortName evidence="1">PS</shortName>
        <ecNumber evidence="1">6.3.2.1</ecNumber>
    </recommendedName>
    <alternativeName>
        <fullName evidence="1">Pantoate--beta-alanine ligase</fullName>
    </alternativeName>
    <alternativeName>
        <fullName evidence="1">Pantoate-activating enzyme</fullName>
    </alternativeName>
</protein>
<reference key="1">
    <citation type="journal article" date="2004" name="Proc. Natl. Acad. Sci. U.S.A.">
        <title>Genomic plasticity of the causative agent of melioidosis, Burkholderia pseudomallei.</title>
        <authorList>
            <person name="Holden M.T.G."/>
            <person name="Titball R.W."/>
            <person name="Peacock S.J."/>
            <person name="Cerdeno-Tarraga A.-M."/>
            <person name="Atkins T."/>
            <person name="Crossman L.C."/>
            <person name="Pitt T."/>
            <person name="Churcher C."/>
            <person name="Mungall K.L."/>
            <person name="Bentley S.D."/>
            <person name="Sebaihia M."/>
            <person name="Thomson N.R."/>
            <person name="Bason N."/>
            <person name="Beacham I.R."/>
            <person name="Brooks K."/>
            <person name="Brown K.A."/>
            <person name="Brown N.F."/>
            <person name="Challis G.L."/>
            <person name="Cherevach I."/>
            <person name="Chillingworth T."/>
            <person name="Cronin A."/>
            <person name="Crossett B."/>
            <person name="Davis P."/>
            <person name="DeShazer D."/>
            <person name="Feltwell T."/>
            <person name="Fraser A."/>
            <person name="Hance Z."/>
            <person name="Hauser H."/>
            <person name="Holroyd S."/>
            <person name="Jagels K."/>
            <person name="Keith K.E."/>
            <person name="Maddison M."/>
            <person name="Moule S."/>
            <person name="Price C."/>
            <person name="Quail M.A."/>
            <person name="Rabbinowitsch E."/>
            <person name="Rutherford K."/>
            <person name="Sanders M."/>
            <person name="Simmonds M."/>
            <person name="Songsivilai S."/>
            <person name="Stevens K."/>
            <person name="Tumapa S."/>
            <person name="Vesaratchavest M."/>
            <person name="Whitehead S."/>
            <person name="Yeats C."/>
            <person name="Barrell B.G."/>
            <person name="Oyston P.C.F."/>
            <person name="Parkhill J."/>
        </authorList>
    </citation>
    <scope>NUCLEOTIDE SEQUENCE [LARGE SCALE GENOMIC DNA]</scope>
    <source>
        <strain>K96243</strain>
    </source>
</reference>
<evidence type="ECO:0000255" key="1">
    <source>
        <dbReference type="HAMAP-Rule" id="MF_00158"/>
    </source>
</evidence>
<name>PANC_BURPS</name>
<proteinExistence type="inferred from homology"/>
<organism>
    <name type="scientific">Burkholderia pseudomallei (strain K96243)</name>
    <dbReference type="NCBI Taxonomy" id="272560"/>
    <lineage>
        <taxon>Bacteria</taxon>
        <taxon>Pseudomonadati</taxon>
        <taxon>Pseudomonadota</taxon>
        <taxon>Betaproteobacteria</taxon>
        <taxon>Burkholderiales</taxon>
        <taxon>Burkholderiaceae</taxon>
        <taxon>Burkholderia</taxon>
        <taxon>pseudomallei group</taxon>
    </lineage>
</organism>
<sequence length="279" mass="31207">MKVISSIQELRDQLRGQNRTAFVPTMGNLHDGHLSLMRLARQHGDPVVASIFVNRLQFGPNEDFDQYPRTLQDDIEKLQKENVYVLFAPTERDMYPEPQEYRVQPPHDLGDILEGEFRPGFFTGVCTVVTKLMACVQPRVAVFGKKDYQQLMIVRRMCQQLALPVEIIAAETVRDADGLALSSRNRYLSEAERAEAPELAKTLAQVRSAVLGGERDLAAIEQRALAHLAARGWKPDYVSIRRRANLVAPSAAHIEAGEPLVVLTAAKLGATRLIDNLEI</sequence>
<gene>
    <name evidence="1" type="primary">panC</name>
    <name type="ordered locus">BPSL0991</name>
</gene>
<dbReference type="EC" id="6.3.2.1" evidence="1"/>
<dbReference type="EMBL" id="BX571965">
    <property type="protein sequence ID" value="CAH34987.1"/>
    <property type="molecule type" value="Genomic_DNA"/>
</dbReference>
<dbReference type="RefSeq" id="WP_004192993.1">
    <property type="nucleotide sequence ID" value="NZ_CP009538.1"/>
</dbReference>
<dbReference type="RefSeq" id="YP_107619.1">
    <property type="nucleotide sequence ID" value="NC_006350.1"/>
</dbReference>
<dbReference type="SMR" id="Q63W97"/>
<dbReference type="STRING" id="272560.BPSL0991"/>
<dbReference type="GeneID" id="93059491"/>
<dbReference type="KEGG" id="bps:BPSL0991"/>
<dbReference type="PATRIC" id="fig|272560.51.peg.583"/>
<dbReference type="eggNOG" id="COG0414">
    <property type="taxonomic scope" value="Bacteria"/>
</dbReference>
<dbReference type="UniPathway" id="UPA00028">
    <property type="reaction ID" value="UER00005"/>
</dbReference>
<dbReference type="Proteomes" id="UP000000605">
    <property type="component" value="Chromosome 1"/>
</dbReference>
<dbReference type="GO" id="GO:0005829">
    <property type="term" value="C:cytosol"/>
    <property type="evidence" value="ECO:0007669"/>
    <property type="project" value="TreeGrafter"/>
</dbReference>
<dbReference type="GO" id="GO:0005524">
    <property type="term" value="F:ATP binding"/>
    <property type="evidence" value="ECO:0007669"/>
    <property type="project" value="UniProtKB-KW"/>
</dbReference>
<dbReference type="GO" id="GO:0004592">
    <property type="term" value="F:pantoate-beta-alanine ligase activity"/>
    <property type="evidence" value="ECO:0007669"/>
    <property type="project" value="UniProtKB-UniRule"/>
</dbReference>
<dbReference type="GO" id="GO:0015940">
    <property type="term" value="P:pantothenate biosynthetic process"/>
    <property type="evidence" value="ECO:0007669"/>
    <property type="project" value="UniProtKB-UniRule"/>
</dbReference>
<dbReference type="CDD" id="cd00560">
    <property type="entry name" value="PanC"/>
    <property type="match status" value="1"/>
</dbReference>
<dbReference type="Gene3D" id="3.40.50.620">
    <property type="entry name" value="HUPs"/>
    <property type="match status" value="1"/>
</dbReference>
<dbReference type="Gene3D" id="3.30.1300.10">
    <property type="entry name" value="Pantoate-beta-alanine ligase, C-terminal domain"/>
    <property type="match status" value="1"/>
</dbReference>
<dbReference type="HAMAP" id="MF_00158">
    <property type="entry name" value="PanC"/>
    <property type="match status" value="1"/>
</dbReference>
<dbReference type="InterPro" id="IPR004821">
    <property type="entry name" value="Cyt_trans-like"/>
</dbReference>
<dbReference type="InterPro" id="IPR003721">
    <property type="entry name" value="Pantoate_ligase"/>
</dbReference>
<dbReference type="InterPro" id="IPR042176">
    <property type="entry name" value="Pantoate_ligase_C"/>
</dbReference>
<dbReference type="InterPro" id="IPR014729">
    <property type="entry name" value="Rossmann-like_a/b/a_fold"/>
</dbReference>
<dbReference type="NCBIfam" id="TIGR00125">
    <property type="entry name" value="cyt_tran_rel"/>
    <property type="match status" value="1"/>
</dbReference>
<dbReference type="NCBIfam" id="TIGR00018">
    <property type="entry name" value="panC"/>
    <property type="match status" value="1"/>
</dbReference>
<dbReference type="PANTHER" id="PTHR21299">
    <property type="entry name" value="CYTIDYLATE KINASE/PANTOATE-BETA-ALANINE LIGASE"/>
    <property type="match status" value="1"/>
</dbReference>
<dbReference type="PANTHER" id="PTHR21299:SF1">
    <property type="entry name" value="PANTOATE--BETA-ALANINE LIGASE"/>
    <property type="match status" value="1"/>
</dbReference>
<dbReference type="Pfam" id="PF02569">
    <property type="entry name" value="Pantoate_ligase"/>
    <property type="match status" value="1"/>
</dbReference>
<dbReference type="SUPFAM" id="SSF52374">
    <property type="entry name" value="Nucleotidylyl transferase"/>
    <property type="match status" value="1"/>
</dbReference>
<comment type="function">
    <text evidence="1">Catalyzes the condensation of pantoate with beta-alanine in an ATP-dependent reaction via a pantoyl-adenylate intermediate.</text>
</comment>
<comment type="catalytic activity">
    <reaction evidence="1">
        <text>(R)-pantoate + beta-alanine + ATP = (R)-pantothenate + AMP + diphosphate + H(+)</text>
        <dbReference type="Rhea" id="RHEA:10912"/>
        <dbReference type="ChEBI" id="CHEBI:15378"/>
        <dbReference type="ChEBI" id="CHEBI:15980"/>
        <dbReference type="ChEBI" id="CHEBI:29032"/>
        <dbReference type="ChEBI" id="CHEBI:30616"/>
        <dbReference type="ChEBI" id="CHEBI:33019"/>
        <dbReference type="ChEBI" id="CHEBI:57966"/>
        <dbReference type="ChEBI" id="CHEBI:456215"/>
        <dbReference type="EC" id="6.3.2.1"/>
    </reaction>
</comment>
<comment type="pathway">
    <text evidence="1">Cofactor biosynthesis; (R)-pantothenate biosynthesis; (R)-pantothenate from (R)-pantoate and beta-alanine: step 1/1.</text>
</comment>
<comment type="subunit">
    <text evidence="1">Homodimer.</text>
</comment>
<comment type="subcellular location">
    <subcellularLocation>
        <location evidence="1">Cytoplasm</location>
    </subcellularLocation>
</comment>
<comment type="miscellaneous">
    <text evidence="1">The reaction proceeds by a bi uni uni bi ping pong mechanism.</text>
</comment>
<comment type="similarity">
    <text evidence="1">Belongs to the pantothenate synthetase family.</text>
</comment>
<keyword id="KW-0067">ATP-binding</keyword>
<keyword id="KW-0963">Cytoplasm</keyword>
<keyword id="KW-0436">Ligase</keyword>
<keyword id="KW-0547">Nucleotide-binding</keyword>
<keyword id="KW-0566">Pantothenate biosynthesis</keyword>
<keyword id="KW-1185">Reference proteome</keyword>
<accession>Q63W97</accession>
<feature type="chain" id="PRO_0000128215" description="Pantothenate synthetase">
    <location>
        <begin position="1"/>
        <end position="279"/>
    </location>
</feature>
<feature type="active site" description="Proton donor" evidence="1">
    <location>
        <position position="33"/>
    </location>
</feature>
<feature type="binding site" evidence="1">
    <location>
        <begin position="26"/>
        <end position="33"/>
    </location>
    <ligand>
        <name>ATP</name>
        <dbReference type="ChEBI" id="CHEBI:30616"/>
    </ligand>
</feature>
<feature type="binding site" evidence="1">
    <location>
        <position position="57"/>
    </location>
    <ligand>
        <name>(R)-pantoate</name>
        <dbReference type="ChEBI" id="CHEBI:15980"/>
    </ligand>
</feature>
<feature type="binding site" evidence="1">
    <location>
        <position position="57"/>
    </location>
    <ligand>
        <name>beta-alanine</name>
        <dbReference type="ChEBI" id="CHEBI:57966"/>
    </ligand>
</feature>
<feature type="binding site" evidence="1">
    <location>
        <begin position="144"/>
        <end position="147"/>
    </location>
    <ligand>
        <name>ATP</name>
        <dbReference type="ChEBI" id="CHEBI:30616"/>
    </ligand>
</feature>
<feature type="binding site" evidence="1">
    <location>
        <position position="150"/>
    </location>
    <ligand>
        <name>(R)-pantoate</name>
        <dbReference type="ChEBI" id="CHEBI:15980"/>
    </ligand>
</feature>
<feature type="binding site" evidence="1">
    <location>
        <position position="173"/>
    </location>
    <ligand>
        <name>ATP</name>
        <dbReference type="ChEBI" id="CHEBI:30616"/>
    </ligand>
</feature>
<feature type="binding site" evidence="1">
    <location>
        <begin position="181"/>
        <end position="184"/>
    </location>
    <ligand>
        <name>ATP</name>
        <dbReference type="ChEBI" id="CHEBI:30616"/>
    </ligand>
</feature>